<reference key="1">
    <citation type="journal article" date="2007" name="Proc. Natl. Acad. Sci. U.S.A.">
        <title>Genome sequencing and comparative analysis of Saccharomyces cerevisiae strain YJM789.</title>
        <authorList>
            <person name="Wei W."/>
            <person name="McCusker J.H."/>
            <person name="Hyman R.W."/>
            <person name="Jones T."/>
            <person name="Ning Y."/>
            <person name="Cao Z."/>
            <person name="Gu Z."/>
            <person name="Bruno D."/>
            <person name="Miranda M."/>
            <person name="Nguyen M."/>
            <person name="Wilhelmy J."/>
            <person name="Komp C."/>
            <person name="Tamse R."/>
            <person name="Wang X."/>
            <person name="Jia P."/>
            <person name="Luedi P."/>
            <person name="Oefner P.J."/>
            <person name="David L."/>
            <person name="Dietrich F.S."/>
            <person name="Li Y."/>
            <person name="Davis R.W."/>
            <person name="Steinmetz L.M."/>
        </authorList>
    </citation>
    <scope>NUCLEOTIDE SEQUENCE [LARGE SCALE GENOMIC DNA]</scope>
    <source>
        <strain>YJM789</strain>
    </source>
</reference>
<dbReference type="EMBL" id="AAFW02000032">
    <property type="protein sequence ID" value="EDN63705.1"/>
    <property type="molecule type" value="Genomic_DNA"/>
</dbReference>
<dbReference type="HOGENOM" id="CLU_1349595_0_0_1"/>
<dbReference type="Proteomes" id="UP000007060">
    <property type="component" value="Unassembled WGS sequence"/>
</dbReference>
<dbReference type="GO" id="GO:0005829">
    <property type="term" value="C:cytosol"/>
    <property type="evidence" value="ECO:0007669"/>
    <property type="project" value="UniProtKB-SubCell"/>
</dbReference>
<dbReference type="InterPro" id="IPR019435">
    <property type="entry name" value="Vel1-like"/>
</dbReference>
<dbReference type="Pfam" id="PF10339">
    <property type="entry name" value="Vel1p"/>
    <property type="match status" value="1"/>
</dbReference>
<gene>
    <name type="ORF">SCY_5430</name>
</gene>
<proteinExistence type="inferred from homology"/>
<accession>A6ZPL5</accession>
<evidence type="ECO:0000250" key="1"/>
<evidence type="ECO:0000255" key="2"/>
<evidence type="ECO:0000305" key="3"/>
<name>YO387_YEAS7</name>
<keyword id="KW-0963">Cytoplasm</keyword>
<keyword id="KW-0732">Signal</keyword>
<keyword id="KW-0862">Zinc</keyword>
<protein>
    <recommendedName>
        <fullName>VEL1-related protein SCY_5430</fullName>
    </recommendedName>
</protein>
<sequence length="206" mass="22174">MSFLNIFTFFSVLVSVATAVRFDLTNVTCNNLHGPHCGTYVMEVVGQNGTFLGQSTFAGADVLTESAGDAWARYLGQETRFLPKLTTIASNDTKNFSPLIFTTNIYTCNPQSFGDAMVPFANTVTGEIEYNSWADTADNASFITGLANQLFNSTQYGVQVASCYPNFASVILSTPTVNIFAANETLPDYCTAIQLKAVCPPDAGFA</sequence>
<organism>
    <name type="scientific">Saccharomyces cerevisiae (strain YJM789)</name>
    <name type="common">Baker's yeast</name>
    <dbReference type="NCBI Taxonomy" id="307796"/>
    <lineage>
        <taxon>Eukaryota</taxon>
        <taxon>Fungi</taxon>
        <taxon>Dikarya</taxon>
        <taxon>Ascomycota</taxon>
        <taxon>Saccharomycotina</taxon>
        <taxon>Saccharomycetes</taxon>
        <taxon>Saccharomycetales</taxon>
        <taxon>Saccharomycetaceae</taxon>
        <taxon>Saccharomyces</taxon>
    </lineage>
</organism>
<comment type="subcellular location">
    <subcellularLocation>
        <location evidence="1">Cytoplasm</location>
        <location evidence="1">Cytosol</location>
    </subcellularLocation>
</comment>
<comment type="induction">
    <text evidence="1">By zinc depletion.</text>
</comment>
<comment type="similarity">
    <text evidence="3">Belongs to the VEL1 family.</text>
</comment>
<feature type="signal peptide" evidence="2">
    <location>
        <begin position="1"/>
        <end position="19"/>
    </location>
</feature>
<feature type="chain" id="PRO_0000326042" description="VEL1-related protein SCY_5430">
    <location>
        <begin position="20"/>
        <end position="206"/>
    </location>
</feature>